<reference key="1">
    <citation type="journal article" date="1990" name="Genes Dev.">
        <title>The b mating-type locus of Ustilago maydis contains variable and constant regions.</title>
        <authorList>
            <person name="Kronstad J.W."/>
            <person name="Leong S.A."/>
        </authorList>
    </citation>
    <scope>NUCLEOTIDE SEQUENCE [GENOMIC DNA]</scope>
    <source>
        <strain>ATCC 22907 / 48</strain>
    </source>
</reference>
<organism>
    <name type="scientific">Mycosarcoma maydis</name>
    <name type="common">Corn smut fungus</name>
    <name type="synonym">Ustilago maydis</name>
    <dbReference type="NCBI Taxonomy" id="5270"/>
    <lineage>
        <taxon>Eukaryota</taxon>
        <taxon>Fungi</taxon>
        <taxon>Dikarya</taxon>
        <taxon>Basidiomycota</taxon>
        <taxon>Ustilaginomycotina</taxon>
        <taxon>Ustilaginomycetes</taxon>
        <taxon>Ustilaginales</taxon>
        <taxon>Ustilaginaceae</taxon>
        <taxon>Mycosarcoma</taxon>
    </lineage>
</organism>
<protein>
    <recommendedName>
        <fullName>Mating-type locus allele B5 protein</fullName>
    </recommendedName>
</protein>
<comment type="function">
    <text>The B locus has at least 25 alleles, and any combination of two different B alleles yields a multimeric regulatory protein, that activates genes responsible for the pathogenicity and for the sexual development of the fungus within the corn plant.</text>
</comment>
<comment type="subcellular location">
    <subcellularLocation>
        <location>Nucleus</location>
    </subcellularLocation>
</comment>
<comment type="similarity">
    <text evidence="4">Belongs to the TALE/M-ATYP homeobox family.</text>
</comment>
<keyword id="KW-0238">DNA-binding</keyword>
<keyword id="KW-0371">Homeobox</keyword>
<keyword id="KW-0539">Nucleus</keyword>
<accession>P22019</accession>
<evidence type="ECO:0000255" key="1"/>
<evidence type="ECO:0000255" key="2">
    <source>
        <dbReference type="PROSITE-ProRule" id="PRU00108"/>
    </source>
</evidence>
<evidence type="ECO:0000256" key="3">
    <source>
        <dbReference type="SAM" id="MobiDB-lite"/>
    </source>
</evidence>
<evidence type="ECO:0000305" key="4"/>
<name>B5_MYCMD</name>
<dbReference type="EMBL" id="X53901">
    <property type="protein sequence ID" value="CAA37869.1"/>
    <property type="molecule type" value="Genomic_DNA"/>
</dbReference>
<dbReference type="EMBL" id="X54069">
    <property type="protein sequence ID" value="CAA38000.1"/>
    <property type="molecule type" value="Genomic_DNA"/>
</dbReference>
<dbReference type="PIR" id="D36671">
    <property type="entry name" value="D36671"/>
</dbReference>
<dbReference type="SMR" id="P22019"/>
<dbReference type="VEuPathDB" id="FungiDB:UMAG_12052"/>
<dbReference type="GO" id="GO:0005634">
    <property type="term" value="C:nucleus"/>
    <property type="evidence" value="ECO:0007669"/>
    <property type="project" value="UniProtKB-SubCell"/>
</dbReference>
<dbReference type="GO" id="GO:0003677">
    <property type="term" value="F:DNA binding"/>
    <property type="evidence" value="ECO:0007669"/>
    <property type="project" value="UniProtKB-KW"/>
</dbReference>
<dbReference type="GO" id="GO:0006355">
    <property type="term" value="P:regulation of DNA-templated transcription"/>
    <property type="evidence" value="ECO:0007669"/>
    <property type="project" value="InterPro"/>
</dbReference>
<dbReference type="CDD" id="cd00086">
    <property type="entry name" value="homeodomain"/>
    <property type="match status" value="1"/>
</dbReference>
<dbReference type="Gene3D" id="1.10.10.60">
    <property type="entry name" value="Homeodomain-like"/>
    <property type="match status" value="1"/>
</dbReference>
<dbReference type="InterPro" id="IPR001356">
    <property type="entry name" value="HD"/>
</dbReference>
<dbReference type="InterPro" id="IPR009057">
    <property type="entry name" value="Homeodomain-like_sf"/>
</dbReference>
<dbReference type="InterPro" id="IPR008422">
    <property type="entry name" value="KN_HD"/>
</dbReference>
<dbReference type="InterPro" id="IPR008888">
    <property type="entry name" value="Ustilago_mating"/>
</dbReference>
<dbReference type="Pfam" id="PF05920">
    <property type="entry name" value="Homeobox_KN"/>
    <property type="match status" value="1"/>
</dbReference>
<dbReference type="Pfam" id="PF05722">
    <property type="entry name" value="Ustilago_mating"/>
    <property type="match status" value="1"/>
</dbReference>
<dbReference type="SUPFAM" id="SSF46689">
    <property type="entry name" value="Homeodomain-like"/>
    <property type="match status" value="1"/>
</dbReference>
<dbReference type="PROSITE" id="PS50071">
    <property type="entry name" value="HOMEOBOX_2"/>
    <property type="match status" value="1"/>
</dbReference>
<feature type="chain" id="PRO_0000049405" description="Mating-type locus allele B5 protein">
    <location>
        <begin position="1"/>
        <end position="410"/>
    </location>
</feature>
<feature type="DNA-binding region" description="Homeobox; TALE-type" evidence="2">
    <location>
        <begin position="107"/>
        <end position="184"/>
    </location>
</feature>
<feature type="region of interest" description="Variable domain between B alleles">
    <location>
        <begin position="1"/>
        <end position="110"/>
    </location>
</feature>
<feature type="region of interest" description="Highly conserved between B alleles">
    <location>
        <begin position="111"/>
        <end position="410"/>
    </location>
</feature>
<feature type="region of interest" description="Disordered" evidence="3">
    <location>
        <begin position="201"/>
        <end position="241"/>
    </location>
</feature>
<feature type="region of interest" description="Disordered" evidence="3">
    <location>
        <begin position="275"/>
        <end position="336"/>
    </location>
</feature>
<feature type="region of interest" description="Not essential for B5 function">
    <location>
        <begin position="333"/>
        <end position="410"/>
    </location>
</feature>
<feature type="region of interest" description="Disordered" evidence="3">
    <location>
        <begin position="366"/>
        <end position="395"/>
    </location>
</feature>
<feature type="short sequence motif" description="Nuclear localization signal" evidence="1">
    <location>
        <begin position="276"/>
        <end position="308"/>
    </location>
</feature>
<feature type="compositionally biased region" description="Low complexity" evidence="3">
    <location>
        <begin position="206"/>
        <end position="222"/>
    </location>
</feature>
<feature type="compositionally biased region" description="Basic residues" evidence="3">
    <location>
        <begin position="294"/>
        <end position="307"/>
    </location>
</feature>
<feature type="compositionally biased region" description="Polar residues" evidence="3">
    <location>
        <begin position="312"/>
        <end position="336"/>
    </location>
</feature>
<feature type="compositionally biased region" description="Basic residues" evidence="3">
    <location>
        <begin position="375"/>
        <end position="388"/>
    </location>
</feature>
<sequence>MSSDPNFSLTSFLECLNEIEHEFLRDKEENRPIIVRKLRELQQKTPNHVADLAHDSKTIEQIHQTAHRIKVAVKTFIRIDQKFVSLCSEVVHGTSKVMEEFNVVSPAVVCRNLSEDLPAYHMRKHFLLTLDNPYPTQEEKQNLVRLTNESTVRVGSSNPARPPLEVHQLTLWFINARRRSGWSHILKKFAREDRSRMKHLVRAKLSSSNQSTPPSPTSEYPSNNLDDFLSDNLGRPLTPADKQQFEDDWASMISWIKYGVKEKVGDWVYDLCAANKKTPKPGMPRPVTTVTKRQPARKTKPAAKPKSRTANPRASTTPSIDSTLDSSKLESTPELSMCSTADTSFSTFGSSLSMSHYNPFQDGNDILQSPTVKARGNRKVKALPKRAGKQQPDEVDNGKIPFLCLSVAFV</sequence>
<proteinExistence type="inferred from homology"/>